<name>PSBM_CHLAT</name>
<dbReference type="EMBL" id="DQ422812">
    <property type="protein sequence ID" value="ABD62222.2"/>
    <property type="molecule type" value="Genomic_DNA"/>
</dbReference>
<dbReference type="RefSeq" id="YP_001019130.1">
    <property type="nucleotide sequence ID" value="NC_008822.1"/>
</dbReference>
<dbReference type="SMR" id="Q19V77"/>
<dbReference type="GeneID" id="4783322"/>
<dbReference type="GO" id="GO:0009535">
    <property type="term" value="C:chloroplast thylakoid membrane"/>
    <property type="evidence" value="ECO:0007669"/>
    <property type="project" value="UniProtKB-SubCell"/>
</dbReference>
<dbReference type="GO" id="GO:0009523">
    <property type="term" value="C:photosystem II"/>
    <property type="evidence" value="ECO:0007669"/>
    <property type="project" value="UniProtKB-KW"/>
</dbReference>
<dbReference type="GO" id="GO:0019684">
    <property type="term" value="P:photosynthesis, light reaction"/>
    <property type="evidence" value="ECO:0007669"/>
    <property type="project" value="InterPro"/>
</dbReference>
<dbReference type="HAMAP" id="MF_00438">
    <property type="entry name" value="PSII_PsbM"/>
    <property type="match status" value="1"/>
</dbReference>
<dbReference type="InterPro" id="IPR007826">
    <property type="entry name" value="PSII_PsbM"/>
</dbReference>
<dbReference type="InterPro" id="IPR037269">
    <property type="entry name" value="PSII_PsbM_sf"/>
</dbReference>
<dbReference type="NCBIfam" id="TIGR03038">
    <property type="entry name" value="PS_II_psbM"/>
    <property type="match status" value="1"/>
</dbReference>
<dbReference type="PANTHER" id="PTHR35774">
    <property type="entry name" value="PHOTOSYSTEM II REACTION CENTER PROTEIN M"/>
    <property type="match status" value="1"/>
</dbReference>
<dbReference type="PANTHER" id="PTHR35774:SF1">
    <property type="entry name" value="PHOTOSYSTEM II REACTION CENTER PROTEIN M"/>
    <property type="match status" value="1"/>
</dbReference>
<dbReference type="Pfam" id="PF05151">
    <property type="entry name" value="PsbM"/>
    <property type="match status" value="1"/>
</dbReference>
<dbReference type="SUPFAM" id="SSF161033">
    <property type="entry name" value="Photosystem II reaction center protein M, PsbM"/>
    <property type="match status" value="1"/>
</dbReference>
<gene>
    <name evidence="1" type="primary">psbM</name>
</gene>
<keyword id="KW-0150">Chloroplast</keyword>
<keyword id="KW-0472">Membrane</keyword>
<keyword id="KW-0602">Photosynthesis</keyword>
<keyword id="KW-0604">Photosystem II</keyword>
<keyword id="KW-0934">Plastid</keyword>
<keyword id="KW-0674">Reaction center</keyword>
<keyword id="KW-0793">Thylakoid</keyword>
<keyword id="KW-0812">Transmembrane</keyword>
<keyword id="KW-1133">Transmembrane helix</keyword>
<geneLocation type="chloroplast"/>
<organism>
    <name type="scientific">Chlorokybus atmophyticus</name>
    <name type="common">Soil alga</name>
    <dbReference type="NCBI Taxonomy" id="3144"/>
    <lineage>
        <taxon>Eukaryota</taxon>
        <taxon>Viridiplantae</taxon>
        <taxon>Streptophyta</taxon>
        <taxon>Chlorokybophyceae</taxon>
        <taxon>Chlorokybales</taxon>
        <taxon>Chlorokybaceae</taxon>
        <taxon>Chlorokybus</taxon>
    </lineage>
</organism>
<comment type="function">
    <text evidence="1">One of the components of the core complex of photosystem II (PSII). PSII is a light-driven water:plastoquinone oxidoreductase that uses light energy to abstract electrons from H(2)O, generating O(2) and a proton gradient subsequently used for ATP formation. It consists of a core antenna complex that captures photons, and an electron transfer chain that converts photonic excitation into a charge separation. This subunit is found at the monomer-monomer interface.</text>
</comment>
<comment type="subunit">
    <text evidence="1">PSII is composed of 1 copy each of membrane proteins PsbA, PsbB, PsbC, PsbD, PsbE, PsbF, PsbH, PsbI, PsbJ, PsbK, PsbL, PsbM, PsbT, PsbX, PsbY, PsbZ, Psb30/Ycf12, at least 3 peripheral proteins of the oxygen-evolving complex and a large number of cofactors. It forms dimeric complexes.</text>
</comment>
<comment type="subcellular location">
    <subcellularLocation>
        <location evidence="1">Plastid</location>
        <location evidence="1">Chloroplast thylakoid membrane</location>
        <topology evidence="1">Single-pass membrane protein</topology>
    </subcellularLocation>
</comment>
<comment type="similarity">
    <text evidence="1">Belongs to the PsbM family.</text>
</comment>
<protein>
    <recommendedName>
        <fullName evidence="1">Photosystem II reaction center protein M</fullName>
        <shortName evidence="1">PSII-M</shortName>
    </recommendedName>
</protein>
<evidence type="ECO:0000255" key="1">
    <source>
        <dbReference type="HAMAP-Rule" id="MF_00438"/>
    </source>
</evidence>
<accession>Q19V77</accession>
<proteinExistence type="inferred from homology"/>
<feature type="chain" id="PRO_0000325725" description="Photosystem II reaction center protein M">
    <location>
        <begin position="1"/>
        <end position="36"/>
    </location>
</feature>
<feature type="transmembrane region" description="Helical" evidence="1">
    <location>
        <begin position="5"/>
        <end position="25"/>
    </location>
</feature>
<sequence>MEVNILGLIATALFIIIPTSFLLILYVQTASQGSKS</sequence>
<reference key="1">
    <citation type="journal article" date="2007" name="BMC Biol.">
        <title>A clade uniting the green algae Mesostigma viride and Chlorokybus atmophyticus represents the deepest branch of the Streptophyta in chloroplast genome-based phylogenies.</title>
        <authorList>
            <person name="Lemieux C."/>
            <person name="Otis C."/>
            <person name="Turmel M."/>
        </authorList>
    </citation>
    <scope>NUCLEOTIDE SEQUENCE [LARGE SCALE GENOMIC DNA]</scope>
    <source>
        <strain>SAG 48.80</strain>
    </source>
</reference>